<sequence>MCSPASSKILYRNPRFLRVAFLQLHHQQQSGVFCDALLQAEGEAVPAHCCILSACSPFFTERLERERPVQGRKVVLEMGGLKIQTLRKLVDFLYTSEMEVSQEEAQDVLSAARQLRVSELETLQLEGGKLVKAPQGRRLNRECLQPPAAAPISARVVGPKSRPQTPLPVTQTPSPLGAVRLKSLGEEEGAHKKTNLPNADSLSDTQLKKKARVCLTQESRSSPSSQREGPKETKSNPGPTALPSLYPSVDEQLLPRKIRLSRSKPSPHVYTSTPSSILSGPSSMPTAPGRRLWRQRTVSKEAQGVDKQKPGEVRPLQSTPDPSDVGKPAENKKQSPELRAPTSSSVEEGQVGRVKLRKIVNGTCWEVVQEPPLRNTQDSPQILEPSDVEEPSGTLLSSVNEQEIPARIQLCQDSPESPRLQDILLSASHSPDHPMVKSEFGSSPMLTGKESDLNIDCREPYTFDTTLLGQPCEAEQYRITSAAATSELEEIFDFMLCGSDVEPPVGSLESPGAEGCRTPSYHLSETGKNWIEGEEWCLPDMELWPRDLTGLEKEPVSENKEPVEPFSPLVMRSENTESFEPLSPLVMPSEVSREELSLRGSWTPDLEITSSQPLDGQGEKLLHFDSSDPSQRSYNHLSPPCSDWAETGLEVSLGMDDVLCPVPKAVREVSANPEQLDPLPGSSEDEEIDVVDWTVEKKLGPTSVPSVWPDPSSESETEVDILT</sequence>
<feature type="chain" id="PRO_0000441744" description="BTB/POZ domain-containing protein 18">
    <location>
        <begin position="1"/>
        <end position="723"/>
    </location>
</feature>
<feature type="domain" description="BTB" evidence="1">
    <location>
        <begin position="34"/>
        <end position="102"/>
    </location>
</feature>
<feature type="region of interest" description="Disordered" evidence="2">
    <location>
        <begin position="150"/>
        <end position="176"/>
    </location>
</feature>
<feature type="region of interest" description="Disordered" evidence="2">
    <location>
        <begin position="188"/>
        <end position="350"/>
    </location>
</feature>
<feature type="region of interest" description="Disordered" evidence="2">
    <location>
        <begin position="370"/>
        <end position="394"/>
    </location>
</feature>
<feature type="region of interest" description="Disordered" evidence="2">
    <location>
        <begin position="603"/>
        <end position="637"/>
    </location>
</feature>
<feature type="region of interest" description="Disordered" evidence="2">
    <location>
        <begin position="699"/>
        <end position="723"/>
    </location>
</feature>
<feature type="compositionally biased region" description="Polar residues" evidence="2">
    <location>
        <begin position="162"/>
        <end position="174"/>
    </location>
</feature>
<feature type="compositionally biased region" description="Polar residues" evidence="2">
    <location>
        <begin position="195"/>
        <end position="205"/>
    </location>
</feature>
<feature type="compositionally biased region" description="Low complexity" evidence="2">
    <location>
        <begin position="217"/>
        <end position="227"/>
    </location>
</feature>
<feature type="compositionally biased region" description="Low complexity" evidence="2">
    <location>
        <begin position="271"/>
        <end position="286"/>
    </location>
</feature>
<feature type="compositionally biased region" description="Basic and acidic residues" evidence="2">
    <location>
        <begin position="303"/>
        <end position="312"/>
    </location>
</feature>
<feature type="compositionally biased region" description="Basic and acidic residues" evidence="2">
    <location>
        <begin position="327"/>
        <end position="336"/>
    </location>
</feature>
<feature type="compositionally biased region" description="Basic and acidic residues" evidence="2">
    <location>
        <begin position="617"/>
        <end position="626"/>
    </location>
</feature>
<feature type="compositionally biased region" description="Polar residues" evidence="2">
    <location>
        <begin position="627"/>
        <end position="636"/>
    </location>
</feature>
<feature type="compositionally biased region" description="Acidic residues" evidence="2">
    <location>
        <begin position="713"/>
        <end position="723"/>
    </location>
</feature>
<feature type="modified residue" description="Phosphoserine" evidence="6">
    <location>
        <position position="414"/>
    </location>
</feature>
<feature type="modified residue" description="Phosphoserine" evidence="6">
    <location>
        <position position="682"/>
    </location>
</feature>
<feature type="modified residue" description="Phosphoserine" evidence="6">
    <location>
        <position position="683"/>
    </location>
</feature>
<dbReference type="EMBL" id="AL929079">
    <property type="status" value="NOT_ANNOTATED_CDS"/>
    <property type="molecule type" value="Genomic_DNA"/>
</dbReference>
<dbReference type="CCDS" id="CCDS79815.1"/>
<dbReference type="RefSeq" id="NP_001138572.1">
    <property type="nucleotide sequence ID" value="NM_001145100.1"/>
</dbReference>
<dbReference type="RefSeq" id="XP_006498589.1">
    <property type="nucleotide sequence ID" value="XM_006498526.4"/>
</dbReference>
<dbReference type="SMR" id="A0A0A6YY25"/>
<dbReference type="FunCoup" id="A0A0A6YY25">
    <property type="interactions" value="628"/>
</dbReference>
<dbReference type="STRING" id="10090.ENSMUSP00000142247"/>
<dbReference type="GlyGen" id="A0A0A6YY25">
    <property type="glycosylation" value="2 sites"/>
</dbReference>
<dbReference type="iPTMnet" id="A0A0A6YY25"/>
<dbReference type="PhosphoSitePlus" id="A0A0A6YY25"/>
<dbReference type="ProteomicsDB" id="265256"/>
<dbReference type="Antibodypedia" id="62798">
    <property type="antibodies" value="12 antibodies from 7 providers"/>
</dbReference>
<dbReference type="Ensembl" id="ENSMUST00000133437.3">
    <property type="protein sequence ID" value="ENSMUSP00000142247.2"/>
    <property type="gene ID" value="ENSMUSG00000086598.10"/>
</dbReference>
<dbReference type="GeneID" id="100270744"/>
<dbReference type="KEGG" id="mmu:100270744"/>
<dbReference type="AGR" id="MGI:3650217"/>
<dbReference type="CTD" id="643376"/>
<dbReference type="MGI" id="MGI:3650217">
    <property type="gene designation" value="Btbd18"/>
</dbReference>
<dbReference type="VEuPathDB" id="HostDB:ENSMUSG00000086598"/>
<dbReference type="GeneTree" id="ENSGT00560000078563"/>
<dbReference type="HOGENOM" id="CLU_380792_0_0_1"/>
<dbReference type="InParanoid" id="A0A0A6YY25"/>
<dbReference type="OMA" id="QQSGVFC"/>
<dbReference type="OrthoDB" id="1925334at2759"/>
<dbReference type="BioGRID-ORCS" id="100270744">
    <property type="hits" value="0 hits in 58 CRISPR screens"/>
</dbReference>
<dbReference type="PRO" id="PR:A0A0A6YY25"/>
<dbReference type="Proteomes" id="UP000000589">
    <property type="component" value="Chromosome 2"/>
</dbReference>
<dbReference type="RNAct" id="A0A0A6YY25">
    <property type="molecule type" value="protein"/>
</dbReference>
<dbReference type="Bgee" id="ENSMUSG00000086598">
    <property type="expression patterns" value="Expressed in cleaving embryo and 15 other cell types or tissues"/>
</dbReference>
<dbReference type="GO" id="GO:0005634">
    <property type="term" value="C:nucleus"/>
    <property type="evidence" value="ECO:0000314"/>
    <property type="project" value="UniProtKB"/>
</dbReference>
<dbReference type="GO" id="GO:0030154">
    <property type="term" value="P:cell differentiation"/>
    <property type="evidence" value="ECO:0007669"/>
    <property type="project" value="UniProtKB-KW"/>
</dbReference>
<dbReference type="GO" id="GO:0007141">
    <property type="term" value="P:male meiosis I"/>
    <property type="evidence" value="ECO:0000315"/>
    <property type="project" value="UniProtKB"/>
</dbReference>
<dbReference type="GO" id="GO:0140541">
    <property type="term" value="P:piRNA transcription"/>
    <property type="evidence" value="ECO:0000315"/>
    <property type="project" value="GO_Central"/>
</dbReference>
<dbReference type="GO" id="GO:0032968">
    <property type="term" value="P:positive regulation of transcription elongation by RNA polymerase II"/>
    <property type="evidence" value="ECO:0007669"/>
    <property type="project" value="InterPro"/>
</dbReference>
<dbReference type="GO" id="GO:0007283">
    <property type="term" value="P:spermatogenesis"/>
    <property type="evidence" value="ECO:0000315"/>
    <property type="project" value="UniProtKB"/>
</dbReference>
<dbReference type="GO" id="GO:0010526">
    <property type="term" value="P:transposable element silencing"/>
    <property type="evidence" value="ECO:0000315"/>
    <property type="project" value="UniProtKB"/>
</dbReference>
<dbReference type="CDD" id="cd18293">
    <property type="entry name" value="BTB_POZ_BTBD18"/>
    <property type="match status" value="1"/>
</dbReference>
<dbReference type="FunFam" id="3.30.710.10:FF:000126">
    <property type="entry name" value="BTB/POZ domain-containing protein 18"/>
    <property type="match status" value="1"/>
</dbReference>
<dbReference type="Gene3D" id="3.30.710.10">
    <property type="entry name" value="Potassium Channel Kv1.1, Chain A"/>
    <property type="match status" value="1"/>
</dbReference>
<dbReference type="InterPro" id="IPR000210">
    <property type="entry name" value="BTB/POZ_dom"/>
</dbReference>
<dbReference type="InterPro" id="IPR042915">
    <property type="entry name" value="BTBD18"/>
</dbReference>
<dbReference type="InterPro" id="IPR011333">
    <property type="entry name" value="SKP1/BTB/POZ_sf"/>
</dbReference>
<dbReference type="PANTHER" id="PTHR47639">
    <property type="entry name" value="BTB/POZ DOMAIN-CONTAINING PROTEIN 18"/>
    <property type="match status" value="1"/>
</dbReference>
<dbReference type="PANTHER" id="PTHR47639:SF1">
    <property type="entry name" value="BTB_POZ DOMAIN-CONTAINING PROTEIN 18"/>
    <property type="match status" value="1"/>
</dbReference>
<dbReference type="Pfam" id="PF00651">
    <property type="entry name" value="BTB"/>
    <property type="match status" value="1"/>
</dbReference>
<dbReference type="SMART" id="SM00225">
    <property type="entry name" value="BTB"/>
    <property type="match status" value="1"/>
</dbReference>
<dbReference type="SUPFAM" id="SSF54695">
    <property type="entry name" value="POZ domain"/>
    <property type="match status" value="1"/>
</dbReference>
<dbReference type="PROSITE" id="PS50097">
    <property type="entry name" value="BTB"/>
    <property type="match status" value="1"/>
</dbReference>
<keyword id="KW-0221">Differentiation</keyword>
<keyword id="KW-0539">Nucleus</keyword>
<keyword id="KW-0597">Phosphoprotein</keyword>
<keyword id="KW-1185">Reference proteome</keyword>
<keyword id="KW-0744">Spermatogenesis</keyword>
<keyword id="KW-0804">Transcription</keyword>
<keyword id="KW-0805">Transcription regulation</keyword>
<accession>A0A0A6YY25</accession>
<comment type="function">
    <text evidence="3">Specifically required during spermatogenesis to promote expression of piRNA precursors. The piRNA metabolic process mediates the repression of transposable elements during meiosis by forming complexes composed of piRNAs and Piwi proteins and governs the methylation and subsequent repression of transposons, which is essential for the germline integrity. Acts by facilitating transcription elongation at piRNA loci during pachytene.</text>
</comment>
<comment type="subcellular location">
    <subcellularLocation>
        <location evidence="3">Nucleus</location>
    </subcellularLocation>
</comment>
<comment type="tissue specificity">
    <text evidence="3">Expressed in testis.</text>
</comment>
<comment type="developmental stage">
    <text evidence="3">Expressed during pachytene in testis: accumulates in early pachytene cells (stages I-VII), declines in late pachytene cells (stages VIII-X) and disappears in diplotene cells (stage XI) (at protein level). Expressed from spermatogonia to spermatids, with trace expression in mature spermatozoa and somatic Sertoli cells.</text>
</comment>
<comment type="disruption phenotype">
    <text evidence="3">Mice are viable but show male sterility due to defects in spermatogenesis. Retrotransposons are derepressed due to DNA demethylation. Defects are caused by impaired piRNA biogenesis.</text>
</comment>
<evidence type="ECO:0000255" key="1">
    <source>
        <dbReference type="PROSITE-ProRule" id="PRU00037"/>
    </source>
</evidence>
<evidence type="ECO:0000256" key="2">
    <source>
        <dbReference type="SAM" id="MobiDB-lite"/>
    </source>
</evidence>
<evidence type="ECO:0000269" key="3">
    <source>
    </source>
</evidence>
<evidence type="ECO:0000305" key="4"/>
<evidence type="ECO:0000312" key="5">
    <source>
        <dbReference type="MGI" id="MGI:3650217"/>
    </source>
</evidence>
<evidence type="ECO:0007744" key="6">
    <source>
    </source>
</evidence>
<gene>
    <name evidence="5" type="primary">Btbd18</name>
</gene>
<protein>
    <recommendedName>
        <fullName evidence="4">BTB/POZ domain-containing protein 18</fullName>
    </recommendedName>
</protein>
<reference key="1">
    <citation type="journal article" date="2009" name="PLoS Biol.">
        <title>Lineage-specific biology revealed by a finished genome assembly of the mouse.</title>
        <authorList>
            <person name="Church D.M."/>
            <person name="Goodstadt L."/>
            <person name="Hillier L.W."/>
            <person name="Zody M.C."/>
            <person name="Goldstein S."/>
            <person name="She X."/>
            <person name="Bult C.J."/>
            <person name="Agarwala R."/>
            <person name="Cherry J.L."/>
            <person name="DiCuccio M."/>
            <person name="Hlavina W."/>
            <person name="Kapustin Y."/>
            <person name="Meric P."/>
            <person name="Maglott D."/>
            <person name="Birtle Z."/>
            <person name="Marques A.C."/>
            <person name="Graves T."/>
            <person name="Zhou S."/>
            <person name="Teague B."/>
            <person name="Potamousis K."/>
            <person name="Churas C."/>
            <person name="Place M."/>
            <person name="Herschleb J."/>
            <person name="Runnheim R."/>
            <person name="Forrest D."/>
            <person name="Amos-Landgraf J."/>
            <person name="Schwartz D.C."/>
            <person name="Cheng Z."/>
            <person name="Lindblad-Toh K."/>
            <person name="Eichler E.E."/>
            <person name="Ponting C.P."/>
        </authorList>
    </citation>
    <scope>NUCLEOTIDE SEQUENCE [LARGE SCALE GENOMIC DNA]</scope>
    <source>
        <strain>C57BL/6J</strain>
    </source>
</reference>
<reference key="2">
    <citation type="journal article" date="2010" name="Cell">
        <title>A tissue-specific atlas of mouse protein phosphorylation and expression.</title>
        <authorList>
            <person name="Huttlin E.L."/>
            <person name="Jedrychowski M.P."/>
            <person name="Elias J.E."/>
            <person name="Goswami T."/>
            <person name="Rad R."/>
            <person name="Beausoleil S.A."/>
            <person name="Villen J."/>
            <person name="Haas W."/>
            <person name="Sowa M.E."/>
            <person name="Gygi S.P."/>
        </authorList>
    </citation>
    <scope>PHOSPHORYLATION [LARGE SCALE ANALYSIS] AT SER-414; SER-682 AND SER-683</scope>
    <scope>IDENTIFICATION BY MASS SPECTROMETRY [LARGE SCALE ANALYSIS]</scope>
    <source>
        <tissue>Testis</tissue>
    </source>
</reference>
<reference key="3">
    <citation type="journal article" date="2017" name="Dev. Cell">
        <title>BTBD18 regulates a subset of piRNA-generating loci through transcription elongation in mice.</title>
        <authorList>
            <person name="Zhou L."/>
            <person name="Canagarajah B."/>
            <person name="Zhao Y."/>
            <person name="Baibakov B."/>
            <person name="Tokuhiro K."/>
            <person name="Maric D."/>
            <person name="Dean J."/>
        </authorList>
    </citation>
    <scope>FUNCTION</scope>
    <scope>SUBCELLULAR LOCATION</scope>
    <scope>TISSUE SPECIFICITY</scope>
    <scope>DEVELOPMENTAL STAGE</scope>
    <scope>DISRUPTION PHENOTYPE</scope>
</reference>
<name>BTBDI_MOUSE</name>
<proteinExistence type="evidence at protein level"/>
<organism>
    <name type="scientific">Mus musculus</name>
    <name type="common">Mouse</name>
    <dbReference type="NCBI Taxonomy" id="10090"/>
    <lineage>
        <taxon>Eukaryota</taxon>
        <taxon>Metazoa</taxon>
        <taxon>Chordata</taxon>
        <taxon>Craniata</taxon>
        <taxon>Vertebrata</taxon>
        <taxon>Euteleostomi</taxon>
        <taxon>Mammalia</taxon>
        <taxon>Eutheria</taxon>
        <taxon>Euarchontoglires</taxon>
        <taxon>Glires</taxon>
        <taxon>Rodentia</taxon>
        <taxon>Myomorpha</taxon>
        <taxon>Muroidea</taxon>
        <taxon>Muridae</taxon>
        <taxon>Murinae</taxon>
        <taxon>Mus</taxon>
        <taxon>Mus</taxon>
    </lineage>
</organism>